<feature type="signal peptide" evidence="1">
    <location>
        <begin position="1"/>
        <end position="25"/>
    </location>
</feature>
<feature type="chain" id="PRO_0000317194" description="NHL repeat-containing protein 3">
    <location>
        <begin position="26"/>
        <end position="347"/>
    </location>
</feature>
<feature type="repeat" description="NHL 1">
    <location>
        <begin position="47"/>
        <end position="93"/>
    </location>
</feature>
<feature type="repeat" description="NHL 2">
    <location>
        <begin position="150"/>
        <end position="196"/>
    </location>
</feature>
<feature type="repeat" description="NHL 3">
    <location>
        <begin position="200"/>
        <end position="243"/>
    </location>
</feature>
<feature type="repeat" description="NHL 4">
    <location>
        <begin position="294"/>
        <end position="338"/>
    </location>
</feature>
<feature type="glycosylation site" description="N-linked (GlcNAc...) asparagine" evidence="1">
    <location>
        <position position="32"/>
    </location>
</feature>
<feature type="glycosylation site" description="N-linked (GlcNAc...) asparagine" evidence="1">
    <location>
        <position position="101"/>
    </location>
</feature>
<feature type="glycosylation site" description="N-linked (GlcNAc...) asparagine" evidence="1">
    <location>
        <position position="206"/>
    </location>
</feature>
<feature type="glycosylation site" description="N-linked (GlcNAc...) asparagine" evidence="1">
    <location>
        <position position="278"/>
    </location>
</feature>
<feature type="splice variant" id="VSP_042858" description="In isoform 2." evidence="2">
    <location>
        <begin position="129"/>
        <end position="195"/>
    </location>
</feature>
<feature type="sequence variant" id="VAR_051233" description="In dbSNP:rs9603498.">
    <original>L</original>
    <variation>R</variation>
    <location>
        <position position="221"/>
    </location>
</feature>
<gene>
    <name type="primary">NHLRC3</name>
</gene>
<dbReference type="EMBL" id="AK300260">
    <property type="protein sequence ID" value="BAG62022.1"/>
    <property type="molecule type" value="mRNA"/>
</dbReference>
<dbReference type="EMBL" id="AL445590">
    <property type="status" value="NOT_ANNOTATED_CDS"/>
    <property type="molecule type" value="Genomic_DNA"/>
</dbReference>
<dbReference type="EMBL" id="CH471075">
    <property type="protein sequence ID" value="EAX08613.1"/>
    <property type="molecule type" value="Genomic_DNA"/>
</dbReference>
<dbReference type="EMBL" id="CH471075">
    <property type="protein sequence ID" value="EAX08615.1"/>
    <property type="molecule type" value="Genomic_DNA"/>
</dbReference>
<dbReference type="EMBL" id="BC140877">
    <property type="protein sequence ID" value="AAI40878.1"/>
    <property type="molecule type" value="mRNA"/>
</dbReference>
<dbReference type="EMBL" id="BC140878">
    <property type="protein sequence ID" value="AAI40879.1"/>
    <property type="molecule type" value="mRNA"/>
</dbReference>
<dbReference type="EMBL" id="AL833329">
    <property type="protein sequence ID" value="CAH10395.1"/>
    <property type="molecule type" value="mRNA"/>
</dbReference>
<dbReference type="CCDS" id="CCDS31961.1">
    <molecule id="Q5JS37-1"/>
</dbReference>
<dbReference type="CCDS" id="CCDS31962.1">
    <molecule id="Q5JS37-2"/>
</dbReference>
<dbReference type="RefSeq" id="NP_001012772.1">
    <molecule id="Q5JS37-1"/>
    <property type="nucleotide sequence ID" value="NM_001012754.4"/>
</dbReference>
<dbReference type="RefSeq" id="NP_001017370.1">
    <molecule id="Q5JS37-2"/>
    <property type="nucleotide sequence ID" value="NM_001017370.3"/>
</dbReference>
<dbReference type="SMR" id="Q5JS37"/>
<dbReference type="BioGRID" id="132506">
    <property type="interactions" value="56"/>
</dbReference>
<dbReference type="FunCoup" id="Q5JS37">
    <property type="interactions" value="269"/>
</dbReference>
<dbReference type="IntAct" id="Q5JS37">
    <property type="interactions" value="26"/>
</dbReference>
<dbReference type="STRING" id="9606.ENSP00000368920"/>
<dbReference type="GlyCosmos" id="Q5JS37">
    <property type="glycosylation" value="5 sites, 1 glycan"/>
</dbReference>
<dbReference type="GlyGen" id="Q5JS37">
    <property type="glycosylation" value="5 sites, 4 N-linked glycans (3 sites), 1 O-linked glycan (1 site)"/>
</dbReference>
<dbReference type="iPTMnet" id="Q5JS37"/>
<dbReference type="PhosphoSitePlus" id="Q5JS37"/>
<dbReference type="BioMuta" id="NHLRC3"/>
<dbReference type="DMDM" id="74741946"/>
<dbReference type="jPOST" id="Q5JS37"/>
<dbReference type="MassIVE" id="Q5JS37"/>
<dbReference type="PaxDb" id="9606-ENSP00000368920"/>
<dbReference type="PeptideAtlas" id="Q5JS37"/>
<dbReference type="ProteomicsDB" id="63133">
    <molecule id="Q5JS37-1"/>
</dbReference>
<dbReference type="ProteomicsDB" id="63134">
    <molecule id="Q5JS37-2"/>
</dbReference>
<dbReference type="Pumba" id="Q5JS37"/>
<dbReference type="Antibodypedia" id="2743">
    <property type="antibodies" value="92 antibodies from 16 providers"/>
</dbReference>
<dbReference type="DNASU" id="387921"/>
<dbReference type="Ensembl" id="ENST00000379599.6">
    <molecule id="Q5JS37-2"/>
    <property type="protein sequence ID" value="ENSP00000368919.2"/>
    <property type="gene ID" value="ENSG00000188811.14"/>
</dbReference>
<dbReference type="Ensembl" id="ENST00000379600.8">
    <molecule id="Q5JS37-1"/>
    <property type="protein sequence ID" value="ENSP00000368920.3"/>
    <property type="gene ID" value="ENSG00000188811.14"/>
</dbReference>
<dbReference type="GeneID" id="387921"/>
<dbReference type="KEGG" id="hsa:387921"/>
<dbReference type="MANE-Select" id="ENST00000379600.8">
    <property type="protein sequence ID" value="ENSP00000368920.3"/>
    <property type="RefSeq nucleotide sequence ID" value="NM_001012754.4"/>
    <property type="RefSeq protein sequence ID" value="NP_001012772.1"/>
</dbReference>
<dbReference type="UCSC" id="uc001uxc.5">
    <molecule id="Q5JS37-1"/>
    <property type="organism name" value="human"/>
</dbReference>
<dbReference type="AGR" id="HGNC:33751"/>
<dbReference type="CTD" id="387921"/>
<dbReference type="DisGeNET" id="387921"/>
<dbReference type="GeneCards" id="NHLRC3"/>
<dbReference type="HGNC" id="HGNC:33751">
    <property type="gene designation" value="NHLRC3"/>
</dbReference>
<dbReference type="HPA" id="ENSG00000188811">
    <property type="expression patterns" value="Low tissue specificity"/>
</dbReference>
<dbReference type="neXtProt" id="NX_Q5JS37"/>
<dbReference type="OpenTargets" id="ENSG00000188811"/>
<dbReference type="PharmGKB" id="PA162397544"/>
<dbReference type="VEuPathDB" id="HostDB:ENSG00000188811"/>
<dbReference type="eggNOG" id="KOG2177">
    <property type="taxonomic scope" value="Eukaryota"/>
</dbReference>
<dbReference type="GeneTree" id="ENSGT00390000008657"/>
<dbReference type="HOGENOM" id="CLU_037899_2_0_1"/>
<dbReference type="InParanoid" id="Q5JS37"/>
<dbReference type="OMA" id="GDFLMSW"/>
<dbReference type="OrthoDB" id="10044505at2759"/>
<dbReference type="PAN-GO" id="Q5JS37">
    <property type="GO annotations" value="3 GO annotations based on evolutionary models"/>
</dbReference>
<dbReference type="PhylomeDB" id="Q5JS37"/>
<dbReference type="TreeFam" id="TF331018"/>
<dbReference type="PathwayCommons" id="Q5JS37"/>
<dbReference type="Reactome" id="R-HSA-6798695">
    <property type="pathway name" value="Neutrophil degranulation"/>
</dbReference>
<dbReference type="SignaLink" id="Q5JS37"/>
<dbReference type="BioGRID-ORCS" id="387921">
    <property type="hits" value="25 hits in 1160 CRISPR screens"/>
</dbReference>
<dbReference type="ChiTaRS" id="NHLRC3">
    <property type="organism name" value="human"/>
</dbReference>
<dbReference type="GenomeRNAi" id="387921"/>
<dbReference type="Pharos" id="Q5JS37">
    <property type="development level" value="Tdark"/>
</dbReference>
<dbReference type="PRO" id="PR:Q5JS37"/>
<dbReference type="Proteomes" id="UP000005640">
    <property type="component" value="Chromosome 13"/>
</dbReference>
<dbReference type="RNAct" id="Q5JS37">
    <property type="molecule type" value="protein"/>
</dbReference>
<dbReference type="Bgee" id="ENSG00000188811">
    <property type="expression patterns" value="Expressed in oocyte and 187 other cell types or tissues"/>
</dbReference>
<dbReference type="ExpressionAtlas" id="Q5JS37">
    <property type="expression patterns" value="baseline and differential"/>
</dbReference>
<dbReference type="GO" id="GO:0035578">
    <property type="term" value="C:azurophil granule lumen"/>
    <property type="evidence" value="ECO:0000304"/>
    <property type="project" value="Reactome"/>
</dbReference>
<dbReference type="GO" id="GO:0005576">
    <property type="term" value="C:extracellular region"/>
    <property type="evidence" value="ECO:0000304"/>
    <property type="project" value="Reactome"/>
</dbReference>
<dbReference type="GO" id="GO:0061630">
    <property type="term" value="F:ubiquitin protein ligase activity"/>
    <property type="evidence" value="ECO:0000318"/>
    <property type="project" value="GO_Central"/>
</dbReference>
<dbReference type="GO" id="GO:0043161">
    <property type="term" value="P:proteasome-mediated ubiquitin-dependent protein catabolic process"/>
    <property type="evidence" value="ECO:0000318"/>
    <property type="project" value="GO_Central"/>
</dbReference>
<dbReference type="GO" id="GO:0000209">
    <property type="term" value="P:protein polyubiquitination"/>
    <property type="evidence" value="ECO:0000318"/>
    <property type="project" value="GO_Central"/>
</dbReference>
<dbReference type="FunFam" id="2.120.10.30:FF:000043">
    <property type="entry name" value="NHL repeat containing 3"/>
    <property type="match status" value="1"/>
</dbReference>
<dbReference type="Gene3D" id="2.120.10.30">
    <property type="entry name" value="TolB, C-terminal domain"/>
    <property type="match status" value="1"/>
</dbReference>
<dbReference type="InterPro" id="IPR011042">
    <property type="entry name" value="6-blade_b-propeller_TolB-like"/>
</dbReference>
<dbReference type="InterPro" id="IPR001258">
    <property type="entry name" value="NHL_repeat"/>
</dbReference>
<dbReference type="PANTHER" id="PTHR10680">
    <property type="entry name" value="PEPTIDYL-GLYCINE ALPHA-AMIDATING MONOOXYGENASE"/>
    <property type="match status" value="1"/>
</dbReference>
<dbReference type="Pfam" id="PF01436">
    <property type="entry name" value="NHL"/>
    <property type="match status" value="1"/>
</dbReference>
<dbReference type="SUPFAM" id="SSF101898">
    <property type="entry name" value="NHL repeat"/>
    <property type="match status" value="1"/>
</dbReference>
<dbReference type="PROSITE" id="PS51125">
    <property type="entry name" value="NHL"/>
    <property type="match status" value="4"/>
</dbReference>
<sequence length="347" mass="38283">MARFWVCVAGAGFFLAFLVLHSRFCGSPVLRNFTFAVSWRTEKILYRLDVGWPKHPEYFTGTTFCVAVDSLNGLVYIGQRGDNIPKILVFTEDGYFLRAWNYTVDTPHGIFAASTLYEQSVWITDVGSGFFGHTVKKYSSFGDLVQVLGTPGKKGTSLNPLQFDNPAELYVEDTGDIYIVDGDGGLNNRLIKLSQDFMILWLHGENGTGPAKFNIPHSVTLDSAGRVWVADRGNKRIQVFDKDTGEWLGAWNNCFTEEGPSSVRFTPDGKYLIVAQLNLSRLSVVAAPPVGSIGECSVISTIQLADQVLPHLLEVDRKTGAVYVAEIGAKQVQKYVPLNSYVPSFGS</sequence>
<keyword id="KW-0025">Alternative splicing</keyword>
<keyword id="KW-0325">Glycoprotein</keyword>
<keyword id="KW-1267">Proteomics identification</keyword>
<keyword id="KW-1185">Reference proteome</keyword>
<keyword id="KW-0677">Repeat</keyword>
<keyword id="KW-0964">Secreted</keyword>
<keyword id="KW-0732">Signal</keyword>
<reference key="1">
    <citation type="journal article" date="2004" name="Nat. Genet.">
        <title>Complete sequencing and characterization of 21,243 full-length human cDNAs.</title>
        <authorList>
            <person name="Ota T."/>
            <person name="Suzuki Y."/>
            <person name="Nishikawa T."/>
            <person name="Otsuki T."/>
            <person name="Sugiyama T."/>
            <person name="Irie R."/>
            <person name="Wakamatsu A."/>
            <person name="Hayashi K."/>
            <person name="Sato H."/>
            <person name="Nagai K."/>
            <person name="Kimura K."/>
            <person name="Makita H."/>
            <person name="Sekine M."/>
            <person name="Obayashi M."/>
            <person name="Nishi T."/>
            <person name="Shibahara T."/>
            <person name="Tanaka T."/>
            <person name="Ishii S."/>
            <person name="Yamamoto J."/>
            <person name="Saito K."/>
            <person name="Kawai Y."/>
            <person name="Isono Y."/>
            <person name="Nakamura Y."/>
            <person name="Nagahari K."/>
            <person name="Murakami K."/>
            <person name="Yasuda T."/>
            <person name="Iwayanagi T."/>
            <person name="Wagatsuma M."/>
            <person name="Shiratori A."/>
            <person name="Sudo H."/>
            <person name="Hosoiri T."/>
            <person name="Kaku Y."/>
            <person name="Kodaira H."/>
            <person name="Kondo H."/>
            <person name="Sugawara M."/>
            <person name="Takahashi M."/>
            <person name="Kanda K."/>
            <person name="Yokoi T."/>
            <person name="Furuya T."/>
            <person name="Kikkawa E."/>
            <person name="Omura Y."/>
            <person name="Abe K."/>
            <person name="Kamihara K."/>
            <person name="Katsuta N."/>
            <person name="Sato K."/>
            <person name="Tanikawa M."/>
            <person name="Yamazaki M."/>
            <person name="Ninomiya K."/>
            <person name="Ishibashi T."/>
            <person name="Yamashita H."/>
            <person name="Murakawa K."/>
            <person name="Fujimori K."/>
            <person name="Tanai H."/>
            <person name="Kimata M."/>
            <person name="Watanabe M."/>
            <person name="Hiraoka S."/>
            <person name="Chiba Y."/>
            <person name="Ishida S."/>
            <person name="Ono Y."/>
            <person name="Takiguchi S."/>
            <person name="Watanabe S."/>
            <person name="Yosida M."/>
            <person name="Hotuta T."/>
            <person name="Kusano J."/>
            <person name="Kanehori K."/>
            <person name="Takahashi-Fujii A."/>
            <person name="Hara H."/>
            <person name="Tanase T.-O."/>
            <person name="Nomura Y."/>
            <person name="Togiya S."/>
            <person name="Komai F."/>
            <person name="Hara R."/>
            <person name="Takeuchi K."/>
            <person name="Arita M."/>
            <person name="Imose N."/>
            <person name="Musashino K."/>
            <person name="Yuuki H."/>
            <person name="Oshima A."/>
            <person name="Sasaki N."/>
            <person name="Aotsuka S."/>
            <person name="Yoshikawa Y."/>
            <person name="Matsunawa H."/>
            <person name="Ichihara T."/>
            <person name="Shiohata N."/>
            <person name="Sano S."/>
            <person name="Moriya S."/>
            <person name="Momiyama H."/>
            <person name="Satoh N."/>
            <person name="Takami S."/>
            <person name="Terashima Y."/>
            <person name="Suzuki O."/>
            <person name="Nakagawa S."/>
            <person name="Senoh A."/>
            <person name="Mizoguchi H."/>
            <person name="Goto Y."/>
            <person name="Shimizu F."/>
            <person name="Wakebe H."/>
            <person name="Hishigaki H."/>
            <person name="Watanabe T."/>
            <person name="Sugiyama A."/>
            <person name="Takemoto M."/>
            <person name="Kawakami B."/>
            <person name="Yamazaki M."/>
            <person name="Watanabe K."/>
            <person name="Kumagai A."/>
            <person name="Itakura S."/>
            <person name="Fukuzumi Y."/>
            <person name="Fujimori Y."/>
            <person name="Komiyama M."/>
            <person name="Tashiro H."/>
            <person name="Tanigami A."/>
            <person name="Fujiwara T."/>
            <person name="Ono T."/>
            <person name="Yamada K."/>
            <person name="Fujii Y."/>
            <person name="Ozaki K."/>
            <person name="Hirao M."/>
            <person name="Ohmori Y."/>
            <person name="Kawabata A."/>
            <person name="Hikiji T."/>
            <person name="Kobatake N."/>
            <person name="Inagaki H."/>
            <person name="Ikema Y."/>
            <person name="Okamoto S."/>
            <person name="Okitani R."/>
            <person name="Kawakami T."/>
            <person name="Noguchi S."/>
            <person name="Itoh T."/>
            <person name="Shigeta K."/>
            <person name="Senba T."/>
            <person name="Matsumura K."/>
            <person name="Nakajima Y."/>
            <person name="Mizuno T."/>
            <person name="Morinaga M."/>
            <person name="Sasaki M."/>
            <person name="Togashi T."/>
            <person name="Oyama M."/>
            <person name="Hata H."/>
            <person name="Watanabe M."/>
            <person name="Komatsu T."/>
            <person name="Mizushima-Sugano J."/>
            <person name="Satoh T."/>
            <person name="Shirai Y."/>
            <person name="Takahashi Y."/>
            <person name="Nakagawa K."/>
            <person name="Okumura K."/>
            <person name="Nagase T."/>
            <person name="Nomura N."/>
            <person name="Kikuchi H."/>
            <person name="Masuho Y."/>
            <person name="Yamashita R."/>
            <person name="Nakai K."/>
            <person name="Yada T."/>
            <person name="Nakamura Y."/>
            <person name="Ohara O."/>
            <person name="Isogai T."/>
            <person name="Sugano S."/>
        </authorList>
    </citation>
    <scope>NUCLEOTIDE SEQUENCE [LARGE SCALE MRNA] (ISOFORM 2)</scope>
    <source>
        <tissue>Placenta</tissue>
    </source>
</reference>
<reference key="2">
    <citation type="journal article" date="2004" name="Nature">
        <title>The DNA sequence and analysis of human chromosome 13.</title>
        <authorList>
            <person name="Dunham A."/>
            <person name="Matthews L.H."/>
            <person name="Burton J."/>
            <person name="Ashurst J.L."/>
            <person name="Howe K.L."/>
            <person name="Ashcroft K.J."/>
            <person name="Beare D.M."/>
            <person name="Burford D.C."/>
            <person name="Hunt S.E."/>
            <person name="Griffiths-Jones S."/>
            <person name="Jones M.C."/>
            <person name="Keenan S.J."/>
            <person name="Oliver K."/>
            <person name="Scott C.E."/>
            <person name="Ainscough R."/>
            <person name="Almeida J.P."/>
            <person name="Ambrose K.D."/>
            <person name="Andrews D.T."/>
            <person name="Ashwell R.I.S."/>
            <person name="Babbage A.K."/>
            <person name="Bagguley C.L."/>
            <person name="Bailey J."/>
            <person name="Bannerjee R."/>
            <person name="Barlow K.F."/>
            <person name="Bates K."/>
            <person name="Beasley H."/>
            <person name="Bird C.P."/>
            <person name="Bray-Allen S."/>
            <person name="Brown A.J."/>
            <person name="Brown J.Y."/>
            <person name="Burrill W."/>
            <person name="Carder C."/>
            <person name="Carter N.P."/>
            <person name="Chapman J.C."/>
            <person name="Clamp M.E."/>
            <person name="Clark S.Y."/>
            <person name="Clarke G."/>
            <person name="Clee C.M."/>
            <person name="Clegg S.C."/>
            <person name="Cobley V."/>
            <person name="Collins J.E."/>
            <person name="Corby N."/>
            <person name="Coville G.J."/>
            <person name="Deloukas P."/>
            <person name="Dhami P."/>
            <person name="Dunham I."/>
            <person name="Dunn M."/>
            <person name="Earthrowl M.E."/>
            <person name="Ellington A.G."/>
            <person name="Faulkner L."/>
            <person name="Frankish A.G."/>
            <person name="Frankland J."/>
            <person name="French L."/>
            <person name="Garner P."/>
            <person name="Garnett J."/>
            <person name="Gilbert J.G.R."/>
            <person name="Gilson C.J."/>
            <person name="Ghori J."/>
            <person name="Grafham D.V."/>
            <person name="Gribble S.M."/>
            <person name="Griffiths C."/>
            <person name="Hall R.E."/>
            <person name="Hammond S."/>
            <person name="Harley J.L."/>
            <person name="Hart E.A."/>
            <person name="Heath P.D."/>
            <person name="Howden P.J."/>
            <person name="Huckle E.J."/>
            <person name="Hunt P.J."/>
            <person name="Hunt A.R."/>
            <person name="Johnson C."/>
            <person name="Johnson D."/>
            <person name="Kay M."/>
            <person name="Kimberley A.M."/>
            <person name="King A."/>
            <person name="Laird G.K."/>
            <person name="Langford C.J."/>
            <person name="Lawlor S."/>
            <person name="Leongamornlert D.A."/>
            <person name="Lloyd D.M."/>
            <person name="Lloyd C."/>
            <person name="Loveland J.E."/>
            <person name="Lovell J."/>
            <person name="Martin S."/>
            <person name="Mashreghi-Mohammadi M."/>
            <person name="McLaren S.J."/>
            <person name="McMurray A."/>
            <person name="Milne S."/>
            <person name="Moore M.J.F."/>
            <person name="Nickerson T."/>
            <person name="Palmer S.A."/>
            <person name="Pearce A.V."/>
            <person name="Peck A.I."/>
            <person name="Pelan S."/>
            <person name="Phillimore B."/>
            <person name="Porter K.M."/>
            <person name="Rice C.M."/>
            <person name="Searle S."/>
            <person name="Sehra H.K."/>
            <person name="Shownkeen R."/>
            <person name="Skuce C.D."/>
            <person name="Smith M."/>
            <person name="Steward C.A."/>
            <person name="Sycamore N."/>
            <person name="Tester J."/>
            <person name="Thomas D.W."/>
            <person name="Tracey A."/>
            <person name="Tromans A."/>
            <person name="Tubby B."/>
            <person name="Wall M."/>
            <person name="Wallis J.M."/>
            <person name="West A.P."/>
            <person name="Whitehead S.L."/>
            <person name="Willey D.L."/>
            <person name="Wilming L."/>
            <person name="Wray P.W."/>
            <person name="Wright M.W."/>
            <person name="Young L."/>
            <person name="Coulson A."/>
            <person name="Durbin R.M."/>
            <person name="Hubbard T."/>
            <person name="Sulston J.E."/>
            <person name="Beck S."/>
            <person name="Bentley D.R."/>
            <person name="Rogers J."/>
            <person name="Ross M.T."/>
        </authorList>
    </citation>
    <scope>NUCLEOTIDE SEQUENCE [LARGE SCALE GENOMIC DNA]</scope>
</reference>
<reference key="3">
    <citation type="submission" date="2005-07" db="EMBL/GenBank/DDBJ databases">
        <authorList>
            <person name="Mural R.J."/>
            <person name="Istrail S."/>
            <person name="Sutton G.G."/>
            <person name="Florea L."/>
            <person name="Halpern A.L."/>
            <person name="Mobarry C.M."/>
            <person name="Lippert R."/>
            <person name="Walenz B."/>
            <person name="Shatkay H."/>
            <person name="Dew I."/>
            <person name="Miller J.R."/>
            <person name="Flanigan M.J."/>
            <person name="Edwards N.J."/>
            <person name="Bolanos R."/>
            <person name="Fasulo D."/>
            <person name="Halldorsson B.V."/>
            <person name="Hannenhalli S."/>
            <person name="Turner R."/>
            <person name="Yooseph S."/>
            <person name="Lu F."/>
            <person name="Nusskern D.R."/>
            <person name="Shue B.C."/>
            <person name="Zheng X.H."/>
            <person name="Zhong F."/>
            <person name="Delcher A.L."/>
            <person name="Huson D.H."/>
            <person name="Kravitz S.A."/>
            <person name="Mouchard L."/>
            <person name="Reinert K."/>
            <person name="Remington K.A."/>
            <person name="Clark A.G."/>
            <person name="Waterman M.S."/>
            <person name="Eichler E.E."/>
            <person name="Adams M.D."/>
            <person name="Hunkapiller M.W."/>
            <person name="Myers E.W."/>
            <person name="Venter J.C."/>
        </authorList>
    </citation>
    <scope>NUCLEOTIDE SEQUENCE [LARGE SCALE GENOMIC DNA]</scope>
</reference>
<reference key="4">
    <citation type="journal article" date="2004" name="Genome Res.">
        <title>The status, quality, and expansion of the NIH full-length cDNA project: the Mammalian Gene Collection (MGC).</title>
        <authorList>
            <consortium name="The MGC Project Team"/>
        </authorList>
    </citation>
    <scope>NUCLEOTIDE SEQUENCE [LARGE SCALE MRNA] (ISOFORM 1)</scope>
</reference>
<reference key="5">
    <citation type="journal article" date="2007" name="BMC Genomics">
        <title>The full-ORF clone resource of the German cDNA consortium.</title>
        <authorList>
            <person name="Bechtel S."/>
            <person name="Rosenfelder H."/>
            <person name="Duda A."/>
            <person name="Schmidt C.P."/>
            <person name="Ernst U."/>
            <person name="Wellenreuther R."/>
            <person name="Mehrle A."/>
            <person name="Schuster C."/>
            <person name="Bahr A."/>
            <person name="Bloecker H."/>
            <person name="Heubner D."/>
            <person name="Hoerlein A."/>
            <person name="Michel G."/>
            <person name="Wedler H."/>
            <person name="Koehrer K."/>
            <person name="Ottenwaelder B."/>
            <person name="Poustka A."/>
            <person name="Wiemann S."/>
            <person name="Schupp I."/>
        </authorList>
    </citation>
    <scope>NUCLEOTIDE SEQUENCE [LARGE SCALE MRNA] OF 1-129 (ISOFORM 1)</scope>
    <source>
        <tissue>Testis</tissue>
    </source>
</reference>
<comment type="subcellular location">
    <subcellularLocation>
        <location evidence="3">Secreted</location>
    </subcellularLocation>
</comment>
<comment type="alternative products">
    <event type="alternative splicing"/>
    <isoform>
        <id>Q5JS37-1</id>
        <name>1</name>
        <sequence type="displayed"/>
    </isoform>
    <isoform>
        <id>Q5JS37-2</id>
        <name>2</name>
        <sequence type="described" ref="VSP_042858"/>
    </isoform>
</comment>
<organism>
    <name type="scientific">Homo sapiens</name>
    <name type="common">Human</name>
    <dbReference type="NCBI Taxonomy" id="9606"/>
    <lineage>
        <taxon>Eukaryota</taxon>
        <taxon>Metazoa</taxon>
        <taxon>Chordata</taxon>
        <taxon>Craniata</taxon>
        <taxon>Vertebrata</taxon>
        <taxon>Euteleostomi</taxon>
        <taxon>Mammalia</taxon>
        <taxon>Eutheria</taxon>
        <taxon>Euarchontoglires</taxon>
        <taxon>Primates</taxon>
        <taxon>Haplorrhini</taxon>
        <taxon>Catarrhini</taxon>
        <taxon>Hominidae</taxon>
        <taxon>Homo</taxon>
    </lineage>
</organism>
<name>NHLC3_HUMAN</name>
<accession>Q5JS37</accession>
<accession>B2RTZ2</accession>
<accession>B4DTL0</accession>
<accession>Q69YI9</accession>
<proteinExistence type="evidence at protein level"/>
<protein>
    <recommendedName>
        <fullName>NHL repeat-containing protein 3</fullName>
    </recommendedName>
</protein>
<evidence type="ECO:0000255" key="1"/>
<evidence type="ECO:0000303" key="2">
    <source>
    </source>
</evidence>
<evidence type="ECO:0000305" key="3"/>